<proteinExistence type="inferred from homology"/>
<organism>
    <name type="scientific">Rhizobium leguminosarum bv. trifolii (strain WSM2304)</name>
    <dbReference type="NCBI Taxonomy" id="395492"/>
    <lineage>
        <taxon>Bacteria</taxon>
        <taxon>Pseudomonadati</taxon>
        <taxon>Pseudomonadota</taxon>
        <taxon>Alphaproteobacteria</taxon>
        <taxon>Hyphomicrobiales</taxon>
        <taxon>Rhizobiaceae</taxon>
        <taxon>Rhizobium/Agrobacterium group</taxon>
        <taxon>Rhizobium</taxon>
    </lineage>
</organism>
<dbReference type="EMBL" id="CP001191">
    <property type="protein sequence ID" value="ACI53763.1"/>
    <property type="molecule type" value="Genomic_DNA"/>
</dbReference>
<dbReference type="RefSeq" id="WP_012556710.1">
    <property type="nucleotide sequence ID" value="NC_011369.1"/>
</dbReference>
<dbReference type="SMR" id="B5ZRD1"/>
<dbReference type="STRING" id="395492.Rleg2_0465"/>
<dbReference type="KEGG" id="rlt:Rleg2_0465"/>
<dbReference type="eggNOG" id="COG3705">
    <property type="taxonomic scope" value="Bacteria"/>
</dbReference>
<dbReference type="HOGENOM" id="CLU_025113_6_0_5"/>
<dbReference type="UniPathway" id="UPA00031">
    <property type="reaction ID" value="UER00006"/>
</dbReference>
<dbReference type="Proteomes" id="UP000008330">
    <property type="component" value="Chromosome"/>
</dbReference>
<dbReference type="GO" id="GO:0005737">
    <property type="term" value="C:cytoplasm"/>
    <property type="evidence" value="ECO:0007669"/>
    <property type="project" value="UniProtKB-SubCell"/>
</dbReference>
<dbReference type="GO" id="GO:0004821">
    <property type="term" value="F:histidine-tRNA ligase activity"/>
    <property type="evidence" value="ECO:0007669"/>
    <property type="project" value="TreeGrafter"/>
</dbReference>
<dbReference type="GO" id="GO:0006427">
    <property type="term" value="P:histidyl-tRNA aminoacylation"/>
    <property type="evidence" value="ECO:0007669"/>
    <property type="project" value="TreeGrafter"/>
</dbReference>
<dbReference type="GO" id="GO:0000105">
    <property type="term" value="P:L-histidine biosynthetic process"/>
    <property type="evidence" value="ECO:0007669"/>
    <property type="project" value="UniProtKB-UniRule"/>
</dbReference>
<dbReference type="Gene3D" id="3.30.930.10">
    <property type="entry name" value="Bira Bifunctional Protein, Domain 2"/>
    <property type="match status" value="1"/>
</dbReference>
<dbReference type="HAMAP" id="MF_00125">
    <property type="entry name" value="HisZ"/>
    <property type="match status" value="1"/>
</dbReference>
<dbReference type="InterPro" id="IPR006195">
    <property type="entry name" value="aa-tRNA-synth_II"/>
</dbReference>
<dbReference type="InterPro" id="IPR045864">
    <property type="entry name" value="aa-tRNA-synth_II/BPL/LPL"/>
</dbReference>
<dbReference type="InterPro" id="IPR041715">
    <property type="entry name" value="HisRS-like_core"/>
</dbReference>
<dbReference type="InterPro" id="IPR004516">
    <property type="entry name" value="HisRS/HisZ"/>
</dbReference>
<dbReference type="InterPro" id="IPR004517">
    <property type="entry name" value="HisZ"/>
</dbReference>
<dbReference type="NCBIfam" id="NF008951">
    <property type="entry name" value="PRK12295.1-4"/>
    <property type="match status" value="1"/>
</dbReference>
<dbReference type="PANTHER" id="PTHR43707:SF1">
    <property type="entry name" value="HISTIDINE--TRNA LIGASE, MITOCHONDRIAL-RELATED"/>
    <property type="match status" value="1"/>
</dbReference>
<dbReference type="PANTHER" id="PTHR43707">
    <property type="entry name" value="HISTIDYL-TRNA SYNTHETASE"/>
    <property type="match status" value="1"/>
</dbReference>
<dbReference type="Pfam" id="PF13393">
    <property type="entry name" value="tRNA-synt_His"/>
    <property type="match status" value="2"/>
</dbReference>
<dbReference type="PIRSF" id="PIRSF001549">
    <property type="entry name" value="His-tRNA_synth"/>
    <property type="match status" value="1"/>
</dbReference>
<dbReference type="SUPFAM" id="SSF55681">
    <property type="entry name" value="Class II aaRS and biotin synthetases"/>
    <property type="match status" value="1"/>
</dbReference>
<dbReference type="PROSITE" id="PS50862">
    <property type="entry name" value="AA_TRNA_LIGASE_II"/>
    <property type="match status" value="1"/>
</dbReference>
<protein>
    <recommendedName>
        <fullName evidence="1">ATP phosphoribosyltransferase regulatory subunit</fullName>
    </recommendedName>
</protein>
<evidence type="ECO:0000255" key="1">
    <source>
        <dbReference type="HAMAP-Rule" id="MF_00125"/>
    </source>
</evidence>
<comment type="function">
    <text evidence="1">Required for the first step of histidine biosynthesis. May allow the feedback regulation of ATP phosphoribosyltransferase activity by histidine.</text>
</comment>
<comment type="pathway">
    <text evidence="1">Amino-acid biosynthesis; L-histidine biosynthesis; L-histidine from 5-phospho-alpha-D-ribose 1-diphosphate: step 1/9.</text>
</comment>
<comment type="subunit">
    <text evidence="1">Heteromultimer composed of HisG and HisZ subunits.</text>
</comment>
<comment type="subcellular location">
    <subcellularLocation>
        <location evidence="1">Cytoplasm</location>
    </subcellularLocation>
</comment>
<comment type="miscellaneous">
    <text>This function is generally fulfilled by the C-terminal part of HisG, which is missing in some bacteria such as this one.</text>
</comment>
<comment type="similarity">
    <text evidence="1">Belongs to the class-II aminoacyl-tRNA synthetase family. HisZ subfamily.</text>
</comment>
<reference key="1">
    <citation type="journal article" date="2010" name="Stand. Genomic Sci.">
        <title>Complete genome sequence of Rhizobium leguminosarum bv trifolii strain WSM2304, an effective microsymbiont of the South American clover Trifolium polymorphum.</title>
        <authorList>
            <person name="Reeve W."/>
            <person name="O'Hara G."/>
            <person name="Chain P."/>
            <person name="Ardley J."/>
            <person name="Brau L."/>
            <person name="Nandesena K."/>
            <person name="Tiwari R."/>
            <person name="Malfatti S."/>
            <person name="Kiss H."/>
            <person name="Lapidus A."/>
            <person name="Copeland A."/>
            <person name="Nolan M."/>
            <person name="Land M."/>
            <person name="Ivanova N."/>
            <person name="Mavromatis K."/>
            <person name="Markowitz V."/>
            <person name="Kyrpides N."/>
            <person name="Melino V."/>
            <person name="Denton M."/>
            <person name="Yates R."/>
            <person name="Howieson J."/>
        </authorList>
    </citation>
    <scope>NUCLEOTIDE SEQUENCE [LARGE SCALE GENOMIC DNA]</scope>
    <source>
        <strain>WSM2304</strain>
    </source>
</reference>
<name>HISZ_RHILW</name>
<feature type="chain" id="PRO_1000095470" description="ATP phosphoribosyltransferase regulatory subunit">
    <location>
        <begin position="1"/>
        <end position="373"/>
    </location>
</feature>
<sequence length="373" mass="40308">MPLINLPEFASDLLAEFDARKVERIDTPVIQPAEPFLDIAGEDLRRRIFMTESETGASLCLRPEFTIPVCLRHIETATGTPKRYAYLGEVFRQRRDGANEFYQAGIEDLGDINIPSADARAIGDATGILARLLPGRRLSVTLGDQAVFEAVVQALGLPLGWQKRLIHAFGNMTQLEALLAGLVSPQFVTGLDDDVAKLVASGDEQALVSHLEQEMQATGYSANAGRSPLEIARRLKEKLILSETRLDDAAFHVLEEFLSLDVPLVNASAALAGFADAAGLKLGNALSRFNGRVAALADAGVDLSCLDYRAAFGRPLDYYTGLVFEVTVEGSAAVLAGGGRFDKLLTFLGATDRIPAVGFSFWLDRIETERAAV</sequence>
<accession>B5ZRD1</accession>
<keyword id="KW-0028">Amino-acid biosynthesis</keyword>
<keyword id="KW-0963">Cytoplasm</keyword>
<keyword id="KW-0368">Histidine biosynthesis</keyword>
<keyword id="KW-1185">Reference proteome</keyword>
<gene>
    <name evidence="1" type="primary">hisZ</name>
    <name type="ordered locus">Rleg2_0465</name>
</gene>